<dbReference type="EMBL" id="CP000880">
    <property type="protein sequence ID" value="ABX24130.1"/>
    <property type="molecule type" value="Genomic_DNA"/>
</dbReference>
<dbReference type="SMR" id="A9MPN8"/>
<dbReference type="STRING" id="41514.SARI_04351"/>
<dbReference type="KEGG" id="ses:SARI_04351"/>
<dbReference type="HOGENOM" id="CLU_105087_3_0_6"/>
<dbReference type="Proteomes" id="UP000002084">
    <property type="component" value="Chromosome"/>
</dbReference>
<dbReference type="Gene3D" id="2.30.110.10">
    <property type="entry name" value="Electron Transport, Fmn-binding Protein, Chain A"/>
    <property type="match status" value="1"/>
</dbReference>
<dbReference type="HAMAP" id="MF_00764">
    <property type="entry name" value="UPF0306"/>
    <property type="match status" value="1"/>
</dbReference>
<dbReference type="InterPro" id="IPR012349">
    <property type="entry name" value="Split_barrel_FMN-bd"/>
</dbReference>
<dbReference type="InterPro" id="IPR011194">
    <property type="entry name" value="UPF0306"/>
</dbReference>
<dbReference type="NCBIfam" id="NF002900">
    <property type="entry name" value="PRK03467.1"/>
    <property type="match status" value="1"/>
</dbReference>
<dbReference type="PIRSF" id="PIRSF009554">
    <property type="entry name" value="UCP009554"/>
    <property type="match status" value="1"/>
</dbReference>
<dbReference type="SUPFAM" id="SSF50475">
    <property type="entry name" value="FMN-binding split barrel"/>
    <property type="match status" value="1"/>
</dbReference>
<name>YHBP_SALAR</name>
<reference key="1">
    <citation type="submission" date="2007-11" db="EMBL/GenBank/DDBJ databases">
        <authorList>
            <consortium name="The Salmonella enterica serovar Arizonae Genome Sequencing Project"/>
            <person name="McClelland M."/>
            <person name="Sanderson E.K."/>
            <person name="Porwollik S."/>
            <person name="Spieth J."/>
            <person name="Clifton W.S."/>
            <person name="Fulton R."/>
            <person name="Chunyan W."/>
            <person name="Wollam A."/>
            <person name="Shah N."/>
            <person name="Pepin K."/>
            <person name="Bhonagiri V."/>
            <person name="Nash W."/>
            <person name="Johnson M."/>
            <person name="Thiruvilangam P."/>
            <person name="Wilson R."/>
        </authorList>
    </citation>
    <scope>NUCLEOTIDE SEQUENCE [LARGE SCALE GENOMIC DNA]</scope>
    <source>
        <strain>ATCC BAA-731 / CDC346-86 / RSK2980</strain>
    </source>
</reference>
<feature type="chain" id="PRO_1000083532" description="UPF0306 protein YhbP">
    <location>
        <begin position="1"/>
        <end position="147"/>
    </location>
</feature>
<organism>
    <name type="scientific">Salmonella arizonae (strain ATCC BAA-731 / CDC346-86 / RSK2980)</name>
    <dbReference type="NCBI Taxonomy" id="41514"/>
    <lineage>
        <taxon>Bacteria</taxon>
        <taxon>Pseudomonadati</taxon>
        <taxon>Pseudomonadota</taxon>
        <taxon>Gammaproteobacteria</taxon>
        <taxon>Enterobacterales</taxon>
        <taxon>Enterobacteriaceae</taxon>
        <taxon>Salmonella</taxon>
    </lineage>
</organism>
<proteinExistence type="inferred from homology"/>
<sequence length="147" mass="16723">MDTLTAISRWLAKQHVVTWCVCHEGELWCANAFYLFDAQHVAFYVLTDDKTRHAQMSGACAPVAGTVNGQPKTVARIRGVQFKGEIRRLEGQESDVARKAYLRRFPVARVLPAPVWEIRLDEIKFTDNTLGFGKKMRWLRDSSAQQA</sequence>
<accession>A9MPN8</accession>
<evidence type="ECO:0000255" key="1">
    <source>
        <dbReference type="HAMAP-Rule" id="MF_00764"/>
    </source>
</evidence>
<keyword id="KW-1185">Reference proteome</keyword>
<comment type="similarity">
    <text evidence="1">Belongs to the UPF0306 family.</text>
</comment>
<protein>
    <recommendedName>
        <fullName evidence="1">UPF0306 protein YhbP</fullName>
    </recommendedName>
</protein>
<gene>
    <name evidence="1" type="primary">yhbP</name>
    <name type="ordered locus">SARI_04351</name>
</gene>